<evidence type="ECO:0000255" key="1">
    <source>
        <dbReference type="HAMAP-Rule" id="MF_00272"/>
    </source>
</evidence>
<evidence type="ECO:0000255" key="2">
    <source>
        <dbReference type="PROSITE-ProRule" id="PRU01066"/>
    </source>
</evidence>
<proteinExistence type="inferred from homology"/>
<sequence>MDNTLKFADSHEWVKDNGDGTVTIGISEHAQELLGDVVFVDLPDTEDEIEAGESFSLVESVKAASDIYAPISGEIVEINEELEDSPELINEEPYEGGWIVKVKMSDASELNNLKDAEEYLSSVEED</sequence>
<accession>B7VSK2</accession>
<comment type="function">
    <text evidence="1">The glycine cleavage system catalyzes the degradation of glycine. The H protein shuttles the methylamine group of glycine from the P protein to the T protein.</text>
</comment>
<comment type="cofactor">
    <cofactor evidence="1">
        <name>(R)-lipoate</name>
        <dbReference type="ChEBI" id="CHEBI:83088"/>
    </cofactor>
    <text evidence="1">Binds 1 lipoyl cofactor covalently.</text>
</comment>
<comment type="subunit">
    <text evidence="1">The glycine cleavage system is composed of four proteins: P, T, L and H.</text>
</comment>
<comment type="similarity">
    <text evidence="1">Belongs to the GcvH family.</text>
</comment>
<protein>
    <recommendedName>
        <fullName evidence="1">Glycine cleavage system H protein</fullName>
    </recommendedName>
</protein>
<dbReference type="EMBL" id="FM954973">
    <property type="protein sequence ID" value="CAV26586.1"/>
    <property type="molecule type" value="Genomic_DNA"/>
</dbReference>
<dbReference type="SMR" id="B7VSK2"/>
<dbReference type="STRING" id="575788.VS_II0819"/>
<dbReference type="KEGG" id="vsp:VS_II0819"/>
<dbReference type="eggNOG" id="COG0509">
    <property type="taxonomic scope" value="Bacteria"/>
</dbReference>
<dbReference type="HOGENOM" id="CLU_097408_2_1_6"/>
<dbReference type="Proteomes" id="UP000009100">
    <property type="component" value="Chromosome 2"/>
</dbReference>
<dbReference type="GO" id="GO:0005829">
    <property type="term" value="C:cytosol"/>
    <property type="evidence" value="ECO:0007669"/>
    <property type="project" value="TreeGrafter"/>
</dbReference>
<dbReference type="GO" id="GO:0005960">
    <property type="term" value="C:glycine cleavage complex"/>
    <property type="evidence" value="ECO:0007669"/>
    <property type="project" value="InterPro"/>
</dbReference>
<dbReference type="GO" id="GO:0019464">
    <property type="term" value="P:glycine decarboxylation via glycine cleavage system"/>
    <property type="evidence" value="ECO:0007669"/>
    <property type="project" value="UniProtKB-UniRule"/>
</dbReference>
<dbReference type="CDD" id="cd06848">
    <property type="entry name" value="GCS_H"/>
    <property type="match status" value="1"/>
</dbReference>
<dbReference type="FunFam" id="2.40.50.100:FF:000011">
    <property type="entry name" value="Glycine cleavage system H protein"/>
    <property type="match status" value="1"/>
</dbReference>
<dbReference type="Gene3D" id="2.40.50.100">
    <property type="match status" value="1"/>
</dbReference>
<dbReference type="HAMAP" id="MF_00272">
    <property type="entry name" value="GcvH"/>
    <property type="match status" value="1"/>
</dbReference>
<dbReference type="InterPro" id="IPR000089">
    <property type="entry name" value="Biotin_lipoyl"/>
</dbReference>
<dbReference type="InterPro" id="IPR002930">
    <property type="entry name" value="GCV_H"/>
</dbReference>
<dbReference type="InterPro" id="IPR033753">
    <property type="entry name" value="GCV_H/Fam206"/>
</dbReference>
<dbReference type="InterPro" id="IPR017453">
    <property type="entry name" value="GCV_H_sub"/>
</dbReference>
<dbReference type="InterPro" id="IPR011053">
    <property type="entry name" value="Single_hybrid_motif"/>
</dbReference>
<dbReference type="NCBIfam" id="TIGR00527">
    <property type="entry name" value="gcvH"/>
    <property type="match status" value="1"/>
</dbReference>
<dbReference type="NCBIfam" id="NF002270">
    <property type="entry name" value="PRK01202.1"/>
    <property type="match status" value="1"/>
</dbReference>
<dbReference type="PANTHER" id="PTHR11715">
    <property type="entry name" value="GLYCINE CLEAVAGE SYSTEM H PROTEIN"/>
    <property type="match status" value="1"/>
</dbReference>
<dbReference type="PANTHER" id="PTHR11715:SF3">
    <property type="entry name" value="GLYCINE CLEAVAGE SYSTEM H PROTEIN-RELATED"/>
    <property type="match status" value="1"/>
</dbReference>
<dbReference type="Pfam" id="PF01597">
    <property type="entry name" value="GCV_H"/>
    <property type="match status" value="1"/>
</dbReference>
<dbReference type="SUPFAM" id="SSF51230">
    <property type="entry name" value="Single hybrid motif"/>
    <property type="match status" value="1"/>
</dbReference>
<dbReference type="PROSITE" id="PS50968">
    <property type="entry name" value="BIOTINYL_LIPOYL"/>
    <property type="match status" value="1"/>
</dbReference>
<feature type="chain" id="PRO_1000132434" description="Glycine cleavage system H protein">
    <location>
        <begin position="1"/>
        <end position="126"/>
    </location>
</feature>
<feature type="domain" description="Lipoyl-binding" evidence="2">
    <location>
        <begin position="21"/>
        <end position="103"/>
    </location>
</feature>
<feature type="modified residue" description="N6-lipoyllysine" evidence="1">
    <location>
        <position position="62"/>
    </location>
</feature>
<keyword id="KW-0450">Lipoyl</keyword>
<name>GCSH_VIBA3</name>
<reference key="1">
    <citation type="submission" date="2009-02" db="EMBL/GenBank/DDBJ databases">
        <title>Vibrio splendidus str. LGP32 complete genome.</title>
        <authorList>
            <person name="Mazel D."/>
            <person name="Le Roux F."/>
        </authorList>
    </citation>
    <scope>NUCLEOTIDE SEQUENCE [LARGE SCALE GENOMIC DNA]</scope>
    <source>
        <strain>LGP32</strain>
    </source>
</reference>
<organism>
    <name type="scientific">Vibrio atlanticus (strain LGP32)</name>
    <name type="common">Vibrio splendidus (strain Mel32)</name>
    <dbReference type="NCBI Taxonomy" id="575788"/>
    <lineage>
        <taxon>Bacteria</taxon>
        <taxon>Pseudomonadati</taxon>
        <taxon>Pseudomonadota</taxon>
        <taxon>Gammaproteobacteria</taxon>
        <taxon>Vibrionales</taxon>
        <taxon>Vibrionaceae</taxon>
        <taxon>Vibrio</taxon>
    </lineage>
</organism>
<gene>
    <name evidence="1" type="primary">gcvH</name>
    <name type="ordered locus">VS_II0819</name>
</gene>